<dbReference type="EC" id="2.7.8.7" evidence="1"/>
<dbReference type="EMBL" id="CP000319">
    <property type="protein sequence ID" value="ABE63045.1"/>
    <property type="molecule type" value="Genomic_DNA"/>
</dbReference>
<dbReference type="RefSeq" id="WP_011510722.1">
    <property type="nucleotide sequence ID" value="NC_007964.1"/>
</dbReference>
<dbReference type="SMR" id="Q1QL52"/>
<dbReference type="STRING" id="323097.Nham_2253"/>
<dbReference type="KEGG" id="nha:Nham_2253"/>
<dbReference type="eggNOG" id="COG0736">
    <property type="taxonomic scope" value="Bacteria"/>
</dbReference>
<dbReference type="HOGENOM" id="CLU_089696_0_2_5"/>
<dbReference type="OrthoDB" id="517356at2"/>
<dbReference type="Proteomes" id="UP000001953">
    <property type="component" value="Chromosome"/>
</dbReference>
<dbReference type="GO" id="GO:0005737">
    <property type="term" value="C:cytoplasm"/>
    <property type="evidence" value="ECO:0007669"/>
    <property type="project" value="UniProtKB-SubCell"/>
</dbReference>
<dbReference type="GO" id="GO:0008897">
    <property type="term" value="F:holo-[acyl-carrier-protein] synthase activity"/>
    <property type="evidence" value="ECO:0007669"/>
    <property type="project" value="UniProtKB-UniRule"/>
</dbReference>
<dbReference type="GO" id="GO:0000287">
    <property type="term" value="F:magnesium ion binding"/>
    <property type="evidence" value="ECO:0007669"/>
    <property type="project" value="UniProtKB-UniRule"/>
</dbReference>
<dbReference type="GO" id="GO:0006633">
    <property type="term" value="P:fatty acid biosynthetic process"/>
    <property type="evidence" value="ECO:0007669"/>
    <property type="project" value="UniProtKB-UniRule"/>
</dbReference>
<dbReference type="Gene3D" id="3.90.470.20">
    <property type="entry name" value="4'-phosphopantetheinyl transferase domain"/>
    <property type="match status" value="1"/>
</dbReference>
<dbReference type="HAMAP" id="MF_00101">
    <property type="entry name" value="AcpS"/>
    <property type="match status" value="1"/>
</dbReference>
<dbReference type="InterPro" id="IPR008278">
    <property type="entry name" value="4-PPantetheinyl_Trfase_dom"/>
</dbReference>
<dbReference type="InterPro" id="IPR037143">
    <property type="entry name" value="4-PPantetheinyl_Trfase_dom_sf"/>
</dbReference>
<dbReference type="InterPro" id="IPR002582">
    <property type="entry name" value="ACPS"/>
</dbReference>
<dbReference type="InterPro" id="IPR004568">
    <property type="entry name" value="Ppantetheine-prot_Trfase_dom"/>
</dbReference>
<dbReference type="NCBIfam" id="TIGR00516">
    <property type="entry name" value="acpS"/>
    <property type="match status" value="1"/>
</dbReference>
<dbReference type="NCBIfam" id="TIGR00556">
    <property type="entry name" value="pantethn_trn"/>
    <property type="match status" value="1"/>
</dbReference>
<dbReference type="Pfam" id="PF01648">
    <property type="entry name" value="ACPS"/>
    <property type="match status" value="1"/>
</dbReference>
<dbReference type="SUPFAM" id="SSF56214">
    <property type="entry name" value="4'-phosphopantetheinyl transferase"/>
    <property type="match status" value="1"/>
</dbReference>
<keyword id="KW-0963">Cytoplasm</keyword>
<keyword id="KW-0275">Fatty acid biosynthesis</keyword>
<keyword id="KW-0276">Fatty acid metabolism</keyword>
<keyword id="KW-0444">Lipid biosynthesis</keyword>
<keyword id="KW-0443">Lipid metabolism</keyword>
<keyword id="KW-0460">Magnesium</keyword>
<keyword id="KW-0479">Metal-binding</keyword>
<keyword id="KW-1185">Reference proteome</keyword>
<keyword id="KW-0808">Transferase</keyword>
<organism>
    <name type="scientific">Nitrobacter hamburgensis (strain DSM 10229 / NCIMB 13809 / X14)</name>
    <dbReference type="NCBI Taxonomy" id="323097"/>
    <lineage>
        <taxon>Bacteria</taxon>
        <taxon>Pseudomonadati</taxon>
        <taxon>Pseudomonadota</taxon>
        <taxon>Alphaproteobacteria</taxon>
        <taxon>Hyphomicrobiales</taxon>
        <taxon>Nitrobacteraceae</taxon>
        <taxon>Nitrobacter</taxon>
    </lineage>
</organism>
<reference key="1">
    <citation type="submission" date="2006-03" db="EMBL/GenBank/DDBJ databases">
        <title>Complete sequence of chromosome of Nitrobacter hamburgensis X14.</title>
        <authorList>
            <consortium name="US DOE Joint Genome Institute"/>
            <person name="Copeland A."/>
            <person name="Lucas S."/>
            <person name="Lapidus A."/>
            <person name="Barry K."/>
            <person name="Detter J.C."/>
            <person name="Glavina del Rio T."/>
            <person name="Hammon N."/>
            <person name="Israni S."/>
            <person name="Dalin E."/>
            <person name="Tice H."/>
            <person name="Pitluck S."/>
            <person name="Chain P."/>
            <person name="Malfatti S."/>
            <person name="Shin M."/>
            <person name="Vergez L."/>
            <person name="Schmutz J."/>
            <person name="Larimer F."/>
            <person name="Land M."/>
            <person name="Hauser L."/>
            <person name="Kyrpides N."/>
            <person name="Ivanova N."/>
            <person name="Ward B."/>
            <person name="Arp D."/>
            <person name="Klotz M."/>
            <person name="Stein L."/>
            <person name="O'Mullan G."/>
            <person name="Starkenburg S."/>
            <person name="Sayavedra L."/>
            <person name="Poret-Peterson A.T."/>
            <person name="Gentry M.E."/>
            <person name="Bruce D."/>
            <person name="Richardson P."/>
        </authorList>
    </citation>
    <scope>NUCLEOTIDE SEQUENCE [LARGE SCALE GENOMIC DNA]</scope>
    <source>
        <strain>DSM 10229 / NCIMB 13809 / X14</strain>
    </source>
</reference>
<evidence type="ECO:0000255" key="1">
    <source>
        <dbReference type="HAMAP-Rule" id="MF_00101"/>
    </source>
</evidence>
<accession>Q1QL52</accession>
<comment type="function">
    <text evidence="1">Transfers the 4'-phosphopantetheine moiety from coenzyme A to a Ser of acyl-carrier-protein.</text>
</comment>
<comment type="catalytic activity">
    <reaction evidence="1">
        <text>apo-[ACP] + CoA = holo-[ACP] + adenosine 3',5'-bisphosphate + H(+)</text>
        <dbReference type="Rhea" id="RHEA:12068"/>
        <dbReference type="Rhea" id="RHEA-COMP:9685"/>
        <dbReference type="Rhea" id="RHEA-COMP:9690"/>
        <dbReference type="ChEBI" id="CHEBI:15378"/>
        <dbReference type="ChEBI" id="CHEBI:29999"/>
        <dbReference type="ChEBI" id="CHEBI:57287"/>
        <dbReference type="ChEBI" id="CHEBI:58343"/>
        <dbReference type="ChEBI" id="CHEBI:64479"/>
        <dbReference type="EC" id="2.7.8.7"/>
    </reaction>
</comment>
<comment type="cofactor">
    <cofactor evidence="1">
        <name>Mg(2+)</name>
        <dbReference type="ChEBI" id="CHEBI:18420"/>
    </cofactor>
</comment>
<comment type="subcellular location">
    <subcellularLocation>
        <location evidence="1">Cytoplasm</location>
    </subcellularLocation>
</comment>
<comment type="similarity">
    <text evidence="1">Belongs to the P-Pant transferase superfamily. AcpS family.</text>
</comment>
<gene>
    <name evidence="1" type="primary">acpS</name>
    <name type="ordered locus">Nham_2253</name>
</gene>
<name>ACPS_NITHX</name>
<feature type="chain" id="PRO_1000008463" description="Holo-[acyl-carrier-protein] synthase">
    <location>
        <begin position="1"/>
        <end position="139"/>
    </location>
</feature>
<feature type="binding site" evidence="1">
    <location>
        <position position="8"/>
    </location>
    <ligand>
        <name>Mg(2+)</name>
        <dbReference type="ChEBI" id="CHEBI:18420"/>
    </ligand>
</feature>
<feature type="binding site" evidence="1">
    <location>
        <position position="61"/>
    </location>
    <ligand>
        <name>Mg(2+)</name>
        <dbReference type="ChEBI" id="CHEBI:18420"/>
    </ligand>
</feature>
<sequence>MIIGVGSDLIDIRRVAKVIERHGDRFLNRIFTDAERAKAARRANNEKMAVATYAKRFAAKEACSKALGTGIRHGVWWRDMGVVNMPSGRPSMILTGGALRRLQMLTPQGLEVRIDLSLTDDWPLAQAFVIISAVTPGNL</sequence>
<proteinExistence type="inferred from homology"/>
<protein>
    <recommendedName>
        <fullName evidence="1">Holo-[acyl-carrier-protein] synthase</fullName>
        <shortName evidence="1">Holo-ACP synthase</shortName>
        <ecNumber evidence="1">2.7.8.7</ecNumber>
    </recommendedName>
    <alternativeName>
        <fullName evidence="1">4'-phosphopantetheinyl transferase AcpS</fullName>
    </alternativeName>
</protein>